<name>DAPD_DECAR</name>
<comment type="catalytic activity">
    <reaction evidence="1">
        <text>(S)-2,3,4,5-tetrahydrodipicolinate + succinyl-CoA + H2O = (S)-2-succinylamino-6-oxoheptanedioate + CoA</text>
        <dbReference type="Rhea" id="RHEA:17325"/>
        <dbReference type="ChEBI" id="CHEBI:15377"/>
        <dbReference type="ChEBI" id="CHEBI:15685"/>
        <dbReference type="ChEBI" id="CHEBI:16845"/>
        <dbReference type="ChEBI" id="CHEBI:57287"/>
        <dbReference type="ChEBI" id="CHEBI:57292"/>
        <dbReference type="EC" id="2.3.1.117"/>
    </reaction>
</comment>
<comment type="pathway">
    <text evidence="1">Amino-acid biosynthesis; L-lysine biosynthesis via DAP pathway; LL-2,6-diaminopimelate from (S)-tetrahydrodipicolinate (succinylase route): step 1/3.</text>
</comment>
<comment type="subunit">
    <text evidence="1">Homotrimer.</text>
</comment>
<comment type="subcellular location">
    <subcellularLocation>
        <location evidence="1">Cytoplasm</location>
    </subcellularLocation>
</comment>
<comment type="similarity">
    <text evidence="1">Belongs to the transferase hexapeptide repeat family.</text>
</comment>
<keyword id="KW-0012">Acyltransferase</keyword>
<keyword id="KW-0028">Amino-acid biosynthesis</keyword>
<keyword id="KW-0963">Cytoplasm</keyword>
<keyword id="KW-0220">Diaminopimelate biosynthesis</keyword>
<keyword id="KW-0457">Lysine biosynthesis</keyword>
<keyword id="KW-0677">Repeat</keyword>
<keyword id="KW-0808">Transferase</keyword>
<sequence>MTHPLQATIEELWERRTELSPQSPPTTIAAINSVIGDLDSGKLRVAEKIAGEWFTHQWIKKAVLLSFRVRDNRVQEAGDIRFYDKVDTKFEGWTEEQFRQGGFRVVPGTIVRKGSYVAKNAVLMPSFVNIGAYVDESTMVDTWVTVGSCAQIGKNVHLSGGVGIGGVLEPLQANPTIIEDNCFIGARSEVVEGVVIGENSVLSMGVYIGQSTPIYDRETGEVTYGRVPPGSVVISGTLPKADGKYSLYAAIIVKKVDAQTRSKTSINELLRP</sequence>
<feature type="chain" id="PRO_1000047136" description="2,3,4,5-tetrahydropyridine-2,6-dicarboxylate N-succinyltransferase">
    <location>
        <begin position="1"/>
        <end position="272"/>
    </location>
</feature>
<feature type="binding site" evidence="1">
    <location>
        <position position="104"/>
    </location>
    <ligand>
        <name>substrate</name>
    </ligand>
</feature>
<feature type="binding site" evidence="1">
    <location>
        <position position="141"/>
    </location>
    <ligand>
        <name>substrate</name>
    </ligand>
</feature>
<gene>
    <name evidence="1" type="primary">dapD</name>
    <name type="ordered locus">Daro_1726</name>
</gene>
<dbReference type="EC" id="2.3.1.117" evidence="1"/>
<dbReference type="EMBL" id="CP000089">
    <property type="protein sequence ID" value="AAZ46473.1"/>
    <property type="molecule type" value="Genomic_DNA"/>
</dbReference>
<dbReference type="SMR" id="Q47FA8"/>
<dbReference type="STRING" id="159087.Daro_1726"/>
<dbReference type="KEGG" id="dar:Daro_1726"/>
<dbReference type="eggNOG" id="COG2171">
    <property type="taxonomic scope" value="Bacteria"/>
</dbReference>
<dbReference type="HOGENOM" id="CLU_050859_0_1_4"/>
<dbReference type="OrthoDB" id="9775362at2"/>
<dbReference type="UniPathway" id="UPA00034">
    <property type="reaction ID" value="UER00019"/>
</dbReference>
<dbReference type="GO" id="GO:0005737">
    <property type="term" value="C:cytoplasm"/>
    <property type="evidence" value="ECO:0007669"/>
    <property type="project" value="UniProtKB-SubCell"/>
</dbReference>
<dbReference type="GO" id="GO:0008666">
    <property type="term" value="F:2,3,4,5-tetrahydropyridine-2,6-dicarboxylate N-succinyltransferase activity"/>
    <property type="evidence" value="ECO:0007669"/>
    <property type="project" value="UniProtKB-UniRule"/>
</dbReference>
<dbReference type="GO" id="GO:0016779">
    <property type="term" value="F:nucleotidyltransferase activity"/>
    <property type="evidence" value="ECO:0007669"/>
    <property type="project" value="TreeGrafter"/>
</dbReference>
<dbReference type="GO" id="GO:0019877">
    <property type="term" value="P:diaminopimelate biosynthetic process"/>
    <property type="evidence" value="ECO:0007669"/>
    <property type="project" value="UniProtKB-UniRule"/>
</dbReference>
<dbReference type="GO" id="GO:0009089">
    <property type="term" value="P:lysine biosynthetic process via diaminopimelate"/>
    <property type="evidence" value="ECO:0007669"/>
    <property type="project" value="UniProtKB-UniRule"/>
</dbReference>
<dbReference type="CDD" id="cd03350">
    <property type="entry name" value="LbH_THP_succinylT"/>
    <property type="match status" value="1"/>
</dbReference>
<dbReference type="Gene3D" id="2.160.10.10">
    <property type="entry name" value="Hexapeptide repeat proteins"/>
    <property type="match status" value="1"/>
</dbReference>
<dbReference type="Gene3D" id="1.10.166.10">
    <property type="entry name" value="Tetrahydrodipicolinate-N-succinyltransferase, N-terminal domain"/>
    <property type="match status" value="1"/>
</dbReference>
<dbReference type="HAMAP" id="MF_00811">
    <property type="entry name" value="DapD"/>
    <property type="match status" value="1"/>
</dbReference>
<dbReference type="InterPro" id="IPR005664">
    <property type="entry name" value="DapD_Trfase_Hexpep_rpt_fam"/>
</dbReference>
<dbReference type="InterPro" id="IPR001451">
    <property type="entry name" value="Hexapep"/>
</dbReference>
<dbReference type="InterPro" id="IPR018357">
    <property type="entry name" value="Hexapep_transf_CS"/>
</dbReference>
<dbReference type="InterPro" id="IPR023180">
    <property type="entry name" value="THP_succinylTrfase_dom1"/>
</dbReference>
<dbReference type="InterPro" id="IPR037133">
    <property type="entry name" value="THP_succinylTrfase_N_sf"/>
</dbReference>
<dbReference type="InterPro" id="IPR011004">
    <property type="entry name" value="Trimer_LpxA-like_sf"/>
</dbReference>
<dbReference type="NCBIfam" id="TIGR00965">
    <property type="entry name" value="dapD"/>
    <property type="match status" value="1"/>
</dbReference>
<dbReference type="NCBIfam" id="NF008808">
    <property type="entry name" value="PRK11830.1"/>
    <property type="match status" value="1"/>
</dbReference>
<dbReference type="PANTHER" id="PTHR19136:SF52">
    <property type="entry name" value="2,3,4,5-TETRAHYDROPYRIDINE-2,6-DICARBOXYLATE N-SUCCINYLTRANSFERASE"/>
    <property type="match status" value="1"/>
</dbReference>
<dbReference type="PANTHER" id="PTHR19136">
    <property type="entry name" value="MOLYBDENUM COFACTOR GUANYLYLTRANSFERASE"/>
    <property type="match status" value="1"/>
</dbReference>
<dbReference type="Pfam" id="PF14602">
    <property type="entry name" value="Hexapep_2"/>
    <property type="match status" value="1"/>
</dbReference>
<dbReference type="Pfam" id="PF14805">
    <property type="entry name" value="THDPS_N_2"/>
    <property type="match status" value="1"/>
</dbReference>
<dbReference type="SUPFAM" id="SSF51161">
    <property type="entry name" value="Trimeric LpxA-like enzymes"/>
    <property type="match status" value="1"/>
</dbReference>
<dbReference type="PROSITE" id="PS00101">
    <property type="entry name" value="HEXAPEP_TRANSFERASES"/>
    <property type="match status" value="1"/>
</dbReference>
<reference key="1">
    <citation type="journal article" date="2009" name="BMC Genomics">
        <title>Metabolic analysis of the soil microbe Dechloromonas aromatica str. RCB: indications of a surprisingly complex life-style and cryptic anaerobic pathways for aromatic degradation.</title>
        <authorList>
            <person name="Salinero K.K."/>
            <person name="Keller K."/>
            <person name="Feil W.S."/>
            <person name="Feil H."/>
            <person name="Trong S."/>
            <person name="Di Bartolo G."/>
            <person name="Lapidus A."/>
        </authorList>
    </citation>
    <scope>NUCLEOTIDE SEQUENCE [LARGE SCALE GENOMIC DNA]</scope>
    <source>
        <strain>RCB</strain>
    </source>
</reference>
<organism>
    <name type="scientific">Dechloromonas aromatica (strain RCB)</name>
    <dbReference type="NCBI Taxonomy" id="159087"/>
    <lineage>
        <taxon>Bacteria</taxon>
        <taxon>Pseudomonadati</taxon>
        <taxon>Pseudomonadota</taxon>
        <taxon>Betaproteobacteria</taxon>
        <taxon>Rhodocyclales</taxon>
        <taxon>Azonexaceae</taxon>
        <taxon>Dechloromonas</taxon>
    </lineage>
</organism>
<protein>
    <recommendedName>
        <fullName evidence="1">2,3,4,5-tetrahydropyridine-2,6-dicarboxylate N-succinyltransferase</fullName>
        <ecNumber evidence="1">2.3.1.117</ecNumber>
    </recommendedName>
    <alternativeName>
        <fullName evidence="1">Tetrahydrodipicolinate N-succinyltransferase</fullName>
        <shortName evidence="1">THDP succinyltransferase</shortName>
        <shortName evidence="1">THP succinyltransferase</shortName>
        <shortName evidence="1">Tetrahydropicolinate succinylase</shortName>
    </alternativeName>
</protein>
<accession>Q47FA8</accession>
<proteinExistence type="inferred from homology"/>
<evidence type="ECO:0000255" key="1">
    <source>
        <dbReference type="HAMAP-Rule" id="MF_00811"/>
    </source>
</evidence>